<proteinExistence type="inferred from homology"/>
<keyword id="KW-0963">Cytoplasm</keyword>
<keyword id="KW-0704">Schiff base</keyword>
<keyword id="KW-0784">Thiamine biosynthesis</keyword>
<keyword id="KW-0808">Transferase</keyword>
<organism>
    <name type="scientific">Yersinia pseudotuberculosis serotype IB (strain PB1/+)</name>
    <dbReference type="NCBI Taxonomy" id="502801"/>
    <lineage>
        <taxon>Bacteria</taxon>
        <taxon>Pseudomonadati</taxon>
        <taxon>Pseudomonadota</taxon>
        <taxon>Gammaproteobacteria</taxon>
        <taxon>Enterobacterales</taxon>
        <taxon>Yersiniaceae</taxon>
        <taxon>Yersinia</taxon>
    </lineage>
</organism>
<sequence length="271" mass="28887">MLKIADTTFTSRLFTGTGKFSSPELMLEALRASGSQLITMAMKRVDLQSGNDAILAPLRQLGVRLLPNTSGAKTAEEAIFAARLAREALNTHWVKLEIHPDVRYLLPDPIETLKAAEVLVKEGFVVLPYCGADPVLCKRLEEVGCAAVMPLGSPIGSNLGLRTRDFLQIIIEQSKVPVVVDAGIGAPSHALEALELGADAVLVNTAIAVAHSPVQMAHAFRLAVESGERARLAGLGASPFNPSQPDTLQLRATATSPLTGFLSQLEEQDHV</sequence>
<evidence type="ECO:0000255" key="1">
    <source>
        <dbReference type="HAMAP-Rule" id="MF_00443"/>
    </source>
</evidence>
<accession>B2K116</accession>
<reference key="1">
    <citation type="submission" date="2008-04" db="EMBL/GenBank/DDBJ databases">
        <title>Complete sequence of Yersinia pseudotuberculosis PB1/+.</title>
        <authorList>
            <person name="Copeland A."/>
            <person name="Lucas S."/>
            <person name="Lapidus A."/>
            <person name="Glavina del Rio T."/>
            <person name="Dalin E."/>
            <person name="Tice H."/>
            <person name="Bruce D."/>
            <person name="Goodwin L."/>
            <person name="Pitluck S."/>
            <person name="Munk A.C."/>
            <person name="Brettin T."/>
            <person name="Detter J.C."/>
            <person name="Han C."/>
            <person name="Tapia R."/>
            <person name="Schmutz J."/>
            <person name="Larimer F."/>
            <person name="Land M."/>
            <person name="Hauser L."/>
            <person name="Challacombe J.F."/>
            <person name="Green L."/>
            <person name="Lindler L.E."/>
            <person name="Nikolich M.P."/>
            <person name="Richardson P."/>
        </authorList>
    </citation>
    <scope>NUCLEOTIDE SEQUENCE [LARGE SCALE GENOMIC DNA]</scope>
    <source>
        <strain>PB1/+</strain>
    </source>
</reference>
<feature type="chain" id="PRO_1000196916" description="Thiazole synthase">
    <location>
        <begin position="1"/>
        <end position="271"/>
    </location>
</feature>
<feature type="active site" description="Schiff-base intermediate with DXP" evidence="1">
    <location>
        <position position="95"/>
    </location>
</feature>
<feature type="binding site" evidence="1">
    <location>
        <position position="156"/>
    </location>
    <ligand>
        <name>1-deoxy-D-xylulose 5-phosphate</name>
        <dbReference type="ChEBI" id="CHEBI:57792"/>
    </ligand>
</feature>
<feature type="binding site" evidence="1">
    <location>
        <begin position="182"/>
        <end position="183"/>
    </location>
    <ligand>
        <name>1-deoxy-D-xylulose 5-phosphate</name>
        <dbReference type="ChEBI" id="CHEBI:57792"/>
    </ligand>
</feature>
<feature type="binding site" evidence="1">
    <location>
        <begin position="204"/>
        <end position="205"/>
    </location>
    <ligand>
        <name>1-deoxy-D-xylulose 5-phosphate</name>
        <dbReference type="ChEBI" id="CHEBI:57792"/>
    </ligand>
</feature>
<protein>
    <recommendedName>
        <fullName evidence="1">Thiazole synthase</fullName>
        <ecNumber evidence="1">2.8.1.10</ecNumber>
    </recommendedName>
</protein>
<gene>
    <name evidence="1" type="primary">thiG</name>
    <name type="ordered locus">YPTS_0307</name>
</gene>
<dbReference type="EC" id="2.8.1.10" evidence="1"/>
<dbReference type="EMBL" id="CP001048">
    <property type="protein sequence ID" value="ACC87298.1"/>
    <property type="molecule type" value="Genomic_DNA"/>
</dbReference>
<dbReference type="RefSeq" id="WP_002228257.1">
    <property type="nucleotide sequence ID" value="NZ_CP009780.1"/>
</dbReference>
<dbReference type="SMR" id="B2K116"/>
<dbReference type="KEGG" id="ypb:YPTS_0307"/>
<dbReference type="PATRIC" id="fig|502801.10.peg.3983"/>
<dbReference type="UniPathway" id="UPA00060"/>
<dbReference type="GO" id="GO:0005737">
    <property type="term" value="C:cytoplasm"/>
    <property type="evidence" value="ECO:0007669"/>
    <property type="project" value="UniProtKB-SubCell"/>
</dbReference>
<dbReference type="GO" id="GO:1990107">
    <property type="term" value="F:thiazole synthase activity"/>
    <property type="evidence" value="ECO:0007669"/>
    <property type="project" value="UniProtKB-EC"/>
</dbReference>
<dbReference type="GO" id="GO:0009229">
    <property type="term" value="P:thiamine diphosphate biosynthetic process"/>
    <property type="evidence" value="ECO:0007669"/>
    <property type="project" value="UniProtKB-UniRule"/>
</dbReference>
<dbReference type="CDD" id="cd04728">
    <property type="entry name" value="ThiG"/>
    <property type="match status" value="1"/>
</dbReference>
<dbReference type="FunFam" id="3.20.20.70:FF:000049">
    <property type="entry name" value="Thiazole synthase"/>
    <property type="match status" value="1"/>
</dbReference>
<dbReference type="Gene3D" id="3.20.20.70">
    <property type="entry name" value="Aldolase class I"/>
    <property type="match status" value="1"/>
</dbReference>
<dbReference type="HAMAP" id="MF_00443">
    <property type="entry name" value="ThiG"/>
    <property type="match status" value="1"/>
</dbReference>
<dbReference type="InterPro" id="IPR013785">
    <property type="entry name" value="Aldolase_TIM"/>
</dbReference>
<dbReference type="InterPro" id="IPR033983">
    <property type="entry name" value="Thiazole_synthase_ThiG"/>
</dbReference>
<dbReference type="InterPro" id="IPR008867">
    <property type="entry name" value="ThiG"/>
</dbReference>
<dbReference type="PANTHER" id="PTHR34266">
    <property type="entry name" value="THIAZOLE SYNTHASE"/>
    <property type="match status" value="1"/>
</dbReference>
<dbReference type="PANTHER" id="PTHR34266:SF2">
    <property type="entry name" value="THIAZOLE SYNTHASE"/>
    <property type="match status" value="1"/>
</dbReference>
<dbReference type="Pfam" id="PF05690">
    <property type="entry name" value="ThiG"/>
    <property type="match status" value="1"/>
</dbReference>
<dbReference type="SUPFAM" id="SSF110399">
    <property type="entry name" value="ThiG-like"/>
    <property type="match status" value="1"/>
</dbReference>
<comment type="function">
    <text evidence="1">Catalyzes the rearrangement of 1-deoxy-D-xylulose 5-phosphate (DXP) to produce the thiazole phosphate moiety of thiamine. Sulfur is provided by the thiocarboxylate moiety of the carrier protein ThiS. In vitro, sulfur can be provided by H(2)S.</text>
</comment>
<comment type="catalytic activity">
    <reaction evidence="1">
        <text>[ThiS sulfur-carrier protein]-C-terminal-Gly-aminoethanethioate + 2-iminoacetate + 1-deoxy-D-xylulose 5-phosphate = [ThiS sulfur-carrier protein]-C-terminal Gly-Gly + 2-[(2R,5Z)-2-carboxy-4-methylthiazol-5(2H)-ylidene]ethyl phosphate + 2 H2O + H(+)</text>
        <dbReference type="Rhea" id="RHEA:26297"/>
        <dbReference type="Rhea" id="RHEA-COMP:12909"/>
        <dbReference type="Rhea" id="RHEA-COMP:19908"/>
        <dbReference type="ChEBI" id="CHEBI:15377"/>
        <dbReference type="ChEBI" id="CHEBI:15378"/>
        <dbReference type="ChEBI" id="CHEBI:57792"/>
        <dbReference type="ChEBI" id="CHEBI:62899"/>
        <dbReference type="ChEBI" id="CHEBI:77846"/>
        <dbReference type="ChEBI" id="CHEBI:90778"/>
        <dbReference type="ChEBI" id="CHEBI:232372"/>
        <dbReference type="EC" id="2.8.1.10"/>
    </reaction>
</comment>
<comment type="pathway">
    <text evidence="1">Cofactor biosynthesis; thiamine diphosphate biosynthesis.</text>
</comment>
<comment type="subunit">
    <text evidence="1">Homotetramer. Forms heterodimers with either ThiH or ThiS.</text>
</comment>
<comment type="subcellular location">
    <subcellularLocation>
        <location evidence="1">Cytoplasm</location>
    </subcellularLocation>
</comment>
<comment type="similarity">
    <text evidence="1">Belongs to the ThiG family.</text>
</comment>
<name>THIG_YERPB</name>